<proteinExistence type="inferred from homology"/>
<feature type="chain" id="PRO_1000074565" description="Phospho-N-acetylmuramoyl-pentapeptide-transferase">
    <location>
        <begin position="1"/>
        <end position="321"/>
    </location>
</feature>
<feature type="transmembrane region" description="Helical" evidence="1">
    <location>
        <begin position="1"/>
        <end position="21"/>
    </location>
</feature>
<feature type="transmembrane region" description="Helical" evidence="1">
    <location>
        <begin position="50"/>
        <end position="70"/>
    </location>
</feature>
<feature type="transmembrane region" description="Helical" evidence="1">
    <location>
        <begin position="76"/>
        <end position="96"/>
    </location>
</feature>
<feature type="transmembrane region" description="Helical" evidence="1">
    <location>
        <begin position="112"/>
        <end position="132"/>
    </location>
</feature>
<feature type="transmembrane region" description="Helical" evidence="1">
    <location>
        <begin position="140"/>
        <end position="160"/>
    </location>
</feature>
<feature type="transmembrane region" description="Helical" evidence="1">
    <location>
        <begin position="176"/>
        <end position="196"/>
    </location>
</feature>
<feature type="transmembrane region" description="Helical" evidence="1">
    <location>
        <begin position="200"/>
        <end position="220"/>
    </location>
</feature>
<feature type="transmembrane region" description="Helical" evidence="1">
    <location>
        <begin position="225"/>
        <end position="245"/>
    </location>
</feature>
<feature type="transmembrane region" description="Helical" evidence="1">
    <location>
        <begin position="250"/>
        <end position="270"/>
    </location>
</feature>
<feature type="transmembrane region" description="Helical" evidence="1">
    <location>
        <begin position="300"/>
        <end position="320"/>
    </location>
</feature>
<evidence type="ECO:0000255" key="1">
    <source>
        <dbReference type="HAMAP-Rule" id="MF_00038"/>
    </source>
</evidence>
<comment type="function">
    <text evidence="1">Catalyzes the initial step of the lipid cycle reactions in the biosynthesis of the cell wall peptidoglycan: transfers peptidoglycan precursor phospho-MurNAc-pentapeptide from UDP-MurNAc-pentapeptide onto the lipid carrier undecaprenyl phosphate, yielding undecaprenyl-pyrophosphoryl-MurNAc-pentapeptide, known as lipid I.</text>
</comment>
<comment type="catalytic activity">
    <reaction evidence="1">
        <text>UDP-N-acetyl-alpha-D-muramoyl-L-alanyl-gamma-D-glutamyl-L-lysyl-D-alanyl-D-alanine + di-trans,octa-cis-undecaprenyl phosphate = Mur2Ac(oyl-L-Ala-gamma-D-Glu-L-Lys-D-Ala-D-Ala)-di-trans,octa-cis-undecaprenyl diphosphate + UMP</text>
        <dbReference type="Rhea" id="RHEA:21920"/>
        <dbReference type="ChEBI" id="CHEBI:57865"/>
        <dbReference type="ChEBI" id="CHEBI:60032"/>
        <dbReference type="ChEBI" id="CHEBI:60392"/>
        <dbReference type="ChEBI" id="CHEBI:70758"/>
        <dbReference type="EC" id="2.7.8.13"/>
    </reaction>
</comment>
<comment type="cofactor">
    <cofactor evidence="1">
        <name>Mg(2+)</name>
        <dbReference type="ChEBI" id="CHEBI:18420"/>
    </cofactor>
</comment>
<comment type="pathway">
    <text evidence="1">Cell wall biogenesis; peptidoglycan biosynthesis.</text>
</comment>
<comment type="subcellular location">
    <subcellularLocation>
        <location evidence="1">Cell membrane</location>
        <topology evidence="1">Multi-pass membrane protein</topology>
    </subcellularLocation>
</comment>
<comment type="similarity">
    <text evidence="1">Belongs to the glycosyltransferase 4 family. MraY subfamily.</text>
</comment>
<keyword id="KW-0131">Cell cycle</keyword>
<keyword id="KW-0132">Cell division</keyword>
<keyword id="KW-1003">Cell membrane</keyword>
<keyword id="KW-0133">Cell shape</keyword>
<keyword id="KW-0961">Cell wall biogenesis/degradation</keyword>
<keyword id="KW-0460">Magnesium</keyword>
<keyword id="KW-0472">Membrane</keyword>
<keyword id="KW-0479">Metal-binding</keyword>
<keyword id="KW-0573">Peptidoglycan synthesis</keyword>
<keyword id="KW-0808">Transferase</keyword>
<keyword id="KW-0812">Transmembrane</keyword>
<keyword id="KW-1133">Transmembrane helix</keyword>
<accession>A5IS68</accession>
<gene>
    <name evidence="1" type="primary">mraY</name>
    <name type="ordered locus">SaurJH9_1241</name>
</gene>
<dbReference type="EC" id="2.7.8.13" evidence="1"/>
<dbReference type="EMBL" id="CP000703">
    <property type="protein sequence ID" value="ABQ49041.1"/>
    <property type="molecule type" value="Genomic_DNA"/>
</dbReference>
<dbReference type="RefSeq" id="WP_000578458.1">
    <property type="nucleotide sequence ID" value="NC_009487.1"/>
</dbReference>
<dbReference type="SMR" id="A5IS68"/>
<dbReference type="KEGG" id="saj:SaurJH9_1241"/>
<dbReference type="HOGENOM" id="CLU_023982_0_1_9"/>
<dbReference type="UniPathway" id="UPA00219"/>
<dbReference type="GO" id="GO:0005886">
    <property type="term" value="C:plasma membrane"/>
    <property type="evidence" value="ECO:0007669"/>
    <property type="project" value="UniProtKB-SubCell"/>
</dbReference>
<dbReference type="GO" id="GO:0046872">
    <property type="term" value="F:metal ion binding"/>
    <property type="evidence" value="ECO:0007669"/>
    <property type="project" value="UniProtKB-KW"/>
</dbReference>
<dbReference type="GO" id="GO:0008963">
    <property type="term" value="F:phospho-N-acetylmuramoyl-pentapeptide-transferase activity"/>
    <property type="evidence" value="ECO:0007669"/>
    <property type="project" value="UniProtKB-UniRule"/>
</dbReference>
<dbReference type="GO" id="GO:0051301">
    <property type="term" value="P:cell division"/>
    <property type="evidence" value="ECO:0007669"/>
    <property type="project" value="UniProtKB-KW"/>
</dbReference>
<dbReference type="GO" id="GO:0071555">
    <property type="term" value="P:cell wall organization"/>
    <property type="evidence" value="ECO:0007669"/>
    <property type="project" value="UniProtKB-KW"/>
</dbReference>
<dbReference type="GO" id="GO:0009252">
    <property type="term" value="P:peptidoglycan biosynthetic process"/>
    <property type="evidence" value="ECO:0007669"/>
    <property type="project" value="UniProtKB-UniRule"/>
</dbReference>
<dbReference type="GO" id="GO:0008360">
    <property type="term" value="P:regulation of cell shape"/>
    <property type="evidence" value="ECO:0007669"/>
    <property type="project" value="UniProtKB-KW"/>
</dbReference>
<dbReference type="CDD" id="cd06852">
    <property type="entry name" value="GT_MraY"/>
    <property type="match status" value="1"/>
</dbReference>
<dbReference type="HAMAP" id="MF_00038">
    <property type="entry name" value="MraY"/>
    <property type="match status" value="1"/>
</dbReference>
<dbReference type="InterPro" id="IPR000715">
    <property type="entry name" value="Glycosyl_transferase_4"/>
</dbReference>
<dbReference type="InterPro" id="IPR003524">
    <property type="entry name" value="PNAcMuramoyl-5peptid_Trfase"/>
</dbReference>
<dbReference type="InterPro" id="IPR018480">
    <property type="entry name" value="PNAcMuramoyl-5peptid_Trfase_CS"/>
</dbReference>
<dbReference type="NCBIfam" id="TIGR00445">
    <property type="entry name" value="mraY"/>
    <property type="match status" value="1"/>
</dbReference>
<dbReference type="PANTHER" id="PTHR22926">
    <property type="entry name" value="PHOSPHO-N-ACETYLMURAMOYL-PENTAPEPTIDE-TRANSFERASE"/>
    <property type="match status" value="1"/>
</dbReference>
<dbReference type="PANTHER" id="PTHR22926:SF5">
    <property type="entry name" value="PHOSPHO-N-ACETYLMURAMOYL-PENTAPEPTIDE-TRANSFERASE HOMOLOG"/>
    <property type="match status" value="1"/>
</dbReference>
<dbReference type="Pfam" id="PF00953">
    <property type="entry name" value="Glycos_transf_4"/>
    <property type="match status" value="1"/>
</dbReference>
<dbReference type="PROSITE" id="PS01347">
    <property type="entry name" value="MRAY_1"/>
    <property type="match status" value="1"/>
</dbReference>
<dbReference type="PROSITE" id="PS01348">
    <property type="entry name" value="MRAY_2"/>
    <property type="match status" value="1"/>
</dbReference>
<name>MRAY_STAA9</name>
<sequence>MIFVYALLALVITFVLVPVLIPTLKRMKFGQSIREEGPQSHMKKTGTPTMGGLTFLLSIVITSLVAIIFVDQANPIILLLFVTIGFGLIGFIDDYIIVVKKNNQGLTSKQKFLAQIGIAIIFFVLSNVFHLVNFSTSIHIPFTNVAIPLSFAYVIFIVFWQVGFSNAVNLTDGLDGLATGLSIIGFTMYAIMSFVLGETAIGIFCIIMLFALLGFLPYNINPAKVFMGDTGSLALGGIFATISIMLNQELSLIFIGLVFVIETLSVMLQVASFKLTGKRIFKMSPIHHHFELIGWSEWKVVTVFWAVGLISGLIGLWIGVH</sequence>
<organism>
    <name type="scientific">Staphylococcus aureus (strain JH9)</name>
    <dbReference type="NCBI Taxonomy" id="359786"/>
    <lineage>
        <taxon>Bacteria</taxon>
        <taxon>Bacillati</taxon>
        <taxon>Bacillota</taxon>
        <taxon>Bacilli</taxon>
        <taxon>Bacillales</taxon>
        <taxon>Staphylococcaceae</taxon>
        <taxon>Staphylococcus</taxon>
    </lineage>
</organism>
<protein>
    <recommendedName>
        <fullName evidence="1">Phospho-N-acetylmuramoyl-pentapeptide-transferase</fullName>
        <ecNumber evidence="1">2.7.8.13</ecNumber>
    </recommendedName>
    <alternativeName>
        <fullName evidence="1">UDP-MurNAc-pentapeptide phosphotransferase</fullName>
    </alternativeName>
</protein>
<reference key="1">
    <citation type="submission" date="2007-05" db="EMBL/GenBank/DDBJ databases">
        <title>Complete sequence of chromosome of Staphylococcus aureus subsp. aureus JH9.</title>
        <authorList>
            <consortium name="US DOE Joint Genome Institute"/>
            <person name="Copeland A."/>
            <person name="Lucas S."/>
            <person name="Lapidus A."/>
            <person name="Barry K."/>
            <person name="Detter J.C."/>
            <person name="Glavina del Rio T."/>
            <person name="Hammon N."/>
            <person name="Israni S."/>
            <person name="Pitluck S."/>
            <person name="Chain P."/>
            <person name="Malfatti S."/>
            <person name="Shin M."/>
            <person name="Vergez L."/>
            <person name="Schmutz J."/>
            <person name="Larimer F."/>
            <person name="Land M."/>
            <person name="Hauser L."/>
            <person name="Kyrpides N."/>
            <person name="Kim E."/>
            <person name="Tomasz A."/>
            <person name="Richardson P."/>
        </authorList>
    </citation>
    <scope>NUCLEOTIDE SEQUENCE [LARGE SCALE GENOMIC DNA]</scope>
    <source>
        <strain>JH9</strain>
    </source>
</reference>